<sequence>MHNVDQQELSKFEQMAHSWWDPNGSFKPIHLLNPLRFNYIQTKANGLFGKKVLDVGCGGGILSEAMAQAGAIVTGIDMTTEPLEIAKQHAIENGLTIHYQQTTVEDLRLNHTACNAEKFDVVTCMEMLEHVPDPLSVIQSCKALLKPDGVLFLSTINRTLKAYMLVVIGAEYLLKMLPKGTHEFEKFIKPAELLTWCDQASLECKEMKGYHFNPLTEKFWLNNDVSCNYIAMLKAK</sequence>
<proteinExistence type="inferred from homology"/>
<accession>Q7VKW2</accession>
<evidence type="ECO:0000255" key="1">
    <source>
        <dbReference type="HAMAP-Rule" id="MF_00472"/>
    </source>
</evidence>
<protein>
    <recommendedName>
        <fullName evidence="1">Ubiquinone biosynthesis O-methyltransferase</fullName>
    </recommendedName>
    <alternativeName>
        <fullName evidence="1">2-polyprenyl-6-hydroxyphenol methylase</fullName>
        <ecNumber evidence="1">2.1.1.222</ecNumber>
    </alternativeName>
    <alternativeName>
        <fullName evidence="1">3-demethylubiquinone 3-O-methyltransferase</fullName>
        <ecNumber evidence="1">2.1.1.64</ecNumber>
    </alternativeName>
</protein>
<organism>
    <name type="scientific">Haemophilus ducreyi (strain 35000HP / ATCC 700724)</name>
    <dbReference type="NCBI Taxonomy" id="233412"/>
    <lineage>
        <taxon>Bacteria</taxon>
        <taxon>Pseudomonadati</taxon>
        <taxon>Pseudomonadota</taxon>
        <taxon>Gammaproteobacteria</taxon>
        <taxon>Pasteurellales</taxon>
        <taxon>Pasteurellaceae</taxon>
        <taxon>Haemophilus</taxon>
    </lineage>
</organism>
<keyword id="KW-0489">Methyltransferase</keyword>
<keyword id="KW-1185">Reference proteome</keyword>
<keyword id="KW-0949">S-adenosyl-L-methionine</keyword>
<keyword id="KW-0808">Transferase</keyword>
<keyword id="KW-0831">Ubiquinone biosynthesis</keyword>
<comment type="function">
    <text evidence="1">O-methyltransferase that catalyzes the 2 O-methylation steps in the ubiquinone biosynthetic pathway.</text>
</comment>
<comment type="catalytic activity">
    <reaction evidence="1">
        <text>a 3-demethylubiquinol + S-adenosyl-L-methionine = a ubiquinol + S-adenosyl-L-homocysteine + H(+)</text>
        <dbReference type="Rhea" id="RHEA:44380"/>
        <dbReference type="Rhea" id="RHEA-COMP:9566"/>
        <dbReference type="Rhea" id="RHEA-COMP:10914"/>
        <dbReference type="ChEBI" id="CHEBI:15378"/>
        <dbReference type="ChEBI" id="CHEBI:17976"/>
        <dbReference type="ChEBI" id="CHEBI:57856"/>
        <dbReference type="ChEBI" id="CHEBI:59789"/>
        <dbReference type="ChEBI" id="CHEBI:84422"/>
        <dbReference type="EC" id="2.1.1.64"/>
    </reaction>
</comment>
<comment type="catalytic activity">
    <reaction evidence="1">
        <text>a 3-(all-trans-polyprenyl)benzene-1,2-diol + S-adenosyl-L-methionine = a 2-methoxy-6-(all-trans-polyprenyl)phenol + S-adenosyl-L-homocysteine + H(+)</text>
        <dbReference type="Rhea" id="RHEA:31411"/>
        <dbReference type="Rhea" id="RHEA-COMP:9550"/>
        <dbReference type="Rhea" id="RHEA-COMP:9551"/>
        <dbReference type="ChEBI" id="CHEBI:15378"/>
        <dbReference type="ChEBI" id="CHEBI:57856"/>
        <dbReference type="ChEBI" id="CHEBI:59789"/>
        <dbReference type="ChEBI" id="CHEBI:62729"/>
        <dbReference type="ChEBI" id="CHEBI:62731"/>
        <dbReference type="EC" id="2.1.1.222"/>
    </reaction>
</comment>
<comment type="pathway">
    <text evidence="1">Cofactor biosynthesis; ubiquinone biosynthesis.</text>
</comment>
<comment type="similarity">
    <text evidence="1">Belongs to the methyltransferase superfamily. UbiG/COQ3 family.</text>
</comment>
<dbReference type="EC" id="2.1.1.222" evidence="1"/>
<dbReference type="EC" id="2.1.1.64" evidence="1"/>
<dbReference type="EMBL" id="AE017143">
    <property type="protein sequence ID" value="AAP96505.1"/>
    <property type="molecule type" value="Genomic_DNA"/>
</dbReference>
<dbReference type="RefSeq" id="WP_010945534.1">
    <property type="nucleotide sequence ID" value="NC_002940.2"/>
</dbReference>
<dbReference type="SMR" id="Q7VKW2"/>
<dbReference type="STRING" id="233412.HD_1750"/>
<dbReference type="DNASU" id="1491600"/>
<dbReference type="KEGG" id="hdu:HD_1750"/>
<dbReference type="eggNOG" id="COG2227">
    <property type="taxonomic scope" value="Bacteria"/>
</dbReference>
<dbReference type="HOGENOM" id="CLU_042432_5_0_6"/>
<dbReference type="OrthoDB" id="9801538at2"/>
<dbReference type="UniPathway" id="UPA00232"/>
<dbReference type="Proteomes" id="UP000001022">
    <property type="component" value="Chromosome"/>
</dbReference>
<dbReference type="GO" id="GO:0102208">
    <property type="term" value="F:2-polyprenyl-6-hydroxyphenol methylase activity"/>
    <property type="evidence" value="ECO:0007669"/>
    <property type="project" value="UniProtKB-EC"/>
</dbReference>
<dbReference type="GO" id="GO:0061542">
    <property type="term" value="F:3-demethylubiquinol 3-O-methyltransferase activity"/>
    <property type="evidence" value="ECO:0007669"/>
    <property type="project" value="UniProtKB-UniRule"/>
</dbReference>
<dbReference type="GO" id="GO:0010420">
    <property type="term" value="F:polyprenyldihydroxybenzoate methyltransferase activity"/>
    <property type="evidence" value="ECO:0007669"/>
    <property type="project" value="InterPro"/>
</dbReference>
<dbReference type="GO" id="GO:0032259">
    <property type="term" value="P:methylation"/>
    <property type="evidence" value="ECO:0007669"/>
    <property type="project" value="UniProtKB-KW"/>
</dbReference>
<dbReference type="CDD" id="cd02440">
    <property type="entry name" value="AdoMet_MTases"/>
    <property type="match status" value="1"/>
</dbReference>
<dbReference type="FunFam" id="3.40.50.150:FF:000028">
    <property type="entry name" value="Ubiquinone biosynthesis O-methyltransferase"/>
    <property type="match status" value="1"/>
</dbReference>
<dbReference type="Gene3D" id="3.40.50.150">
    <property type="entry name" value="Vaccinia Virus protein VP39"/>
    <property type="match status" value="1"/>
</dbReference>
<dbReference type="HAMAP" id="MF_00472">
    <property type="entry name" value="UbiG"/>
    <property type="match status" value="1"/>
</dbReference>
<dbReference type="InterPro" id="IPR029063">
    <property type="entry name" value="SAM-dependent_MTases_sf"/>
</dbReference>
<dbReference type="InterPro" id="IPR010233">
    <property type="entry name" value="UbiG_MeTrfase"/>
</dbReference>
<dbReference type="NCBIfam" id="TIGR01983">
    <property type="entry name" value="UbiG"/>
    <property type="match status" value="1"/>
</dbReference>
<dbReference type="PANTHER" id="PTHR43464">
    <property type="entry name" value="METHYLTRANSFERASE"/>
    <property type="match status" value="1"/>
</dbReference>
<dbReference type="PANTHER" id="PTHR43464:SF19">
    <property type="entry name" value="UBIQUINONE BIOSYNTHESIS O-METHYLTRANSFERASE, MITOCHONDRIAL"/>
    <property type="match status" value="1"/>
</dbReference>
<dbReference type="Pfam" id="PF13489">
    <property type="entry name" value="Methyltransf_23"/>
    <property type="match status" value="1"/>
</dbReference>
<dbReference type="SUPFAM" id="SSF53335">
    <property type="entry name" value="S-adenosyl-L-methionine-dependent methyltransferases"/>
    <property type="match status" value="1"/>
</dbReference>
<reference key="1">
    <citation type="submission" date="2003-06" db="EMBL/GenBank/DDBJ databases">
        <title>The complete genome sequence of Haemophilus ducreyi.</title>
        <authorList>
            <person name="Munson R.S. Jr."/>
            <person name="Ray W.C."/>
            <person name="Mahairas G."/>
            <person name="Sabo P."/>
            <person name="Mungur R."/>
            <person name="Johnson L."/>
            <person name="Nguyen D."/>
            <person name="Wang J."/>
            <person name="Forst C."/>
            <person name="Hood L."/>
        </authorList>
    </citation>
    <scope>NUCLEOTIDE SEQUENCE [LARGE SCALE GENOMIC DNA]</scope>
    <source>
        <strain>35000HP / ATCC 700724</strain>
    </source>
</reference>
<gene>
    <name evidence="1" type="primary">ubiG</name>
    <name type="ordered locus">HD_1750</name>
</gene>
<name>UBIG_HAEDU</name>
<feature type="chain" id="PRO_0000193383" description="Ubiquinone biosynthesis O-methyltransferase">
    <location>
        <begin position="1"/>
        <end position="236"/>
    </location>
</feature>
<feature type="binding site" evidence="1">
    <location>
        <position position="36"/>
    </location>
    <ligand>
        <name>S-adenosyl-L-methionine</name>
        <dbReference type="ChEBI" id="CHEBI:59789"/>
    </ligand>
</feature>
<feature type="binding site" evidence="1">
    <location>
        <position position="56"/>
    </location>
    <ligand>
        <name>S-adenosyl-L-methionine</name>
        <dbReference type="ChEBI" id="CHEBI:59789"/>
    </ligand>
</feature>
<feature type="binding site" evidence="1">
    <location>
        <position position="77"/>
    </location>
    <ligand>
        <name>S-adenosyl-L-methionine</name>
        <dbReference type="ChEBI" id="CHEBI:59789"/>
    </ligand>
</feature>
<feature type="binding site" evidence="1">
    <location>
        <position position="125"/>
    </location>
    <ligand>
        <name>S-adenosyl-L-methionine</name>
        <dbReference type="ChEBI" id="CHEBI:59789"/>
    </ligand>
</feature>